<comment type="subunit">
    <text evidence="1">Interacts with the 40S ribosomal subunit.</text>
</comment>
<comment type="subcellular location">
    <subcellularLocation>
        <location evidence="1">Cytoplasm</location>
    </subcellularLocation>
</comment>
<comment type="domain">
    <text>The SUI1 domain may be involved in RNA binding.</text>
</comment>
<comment type="similarity">
    <text evidence="3">Belongs to the DENR family.</text>
</comment>
<dbReference type="EMBL" id="CR382126">
    <property type="protein sequence ID" value="CAG98767.1"/>
    <property type="molecule type" value="Genomic_DNA"/>
</dbReference>
<dbReference type="RefSeq" id="XP_456059.1">
    <property type="nucleotide sequence ID" value="XM_456059.1"/>
</dbReference>
<dbReference type="SMR" id="Q6CJ30"/>
<dbReference type="FunCoup" id="Q6CJ30">
    <property type="interactions" value="1265"/>
</dbReference>
<dbReference type="STRING" id="284590.Q6CJ30"/>
<dbReference type="PaxDb" id="284590-Q6CJ30"/>
<dbReference type="KEGG" id="kla:KLLA0_F21934g"/>
<dbReference type="eggNOG" id="KOG3239">
    <property type="taxonomic scope" value="Eukaryota"/>
</dbReference>
<dbReference type="HOGENOM" id="CLU_073511_0_1_1"/>
<dbReference type="InParanoid" id="Q6CJ30"/>
<dbReference type="OMA" id="EVFEIDM"/>
<dbReference type="Proteomes" id="UP000000598">
    <property type="component" value="Chromosome F"/>
</dbReference>
<dbReference type="GO" id="GO:0005737">
    <property type="term" value="C:cytoplasm"/>
    <property type="evidence" value="ECO:0007669"/>
    <property type="project" value="UniProtKB-SubCell"/>
</dbReference>
<dbReference type="GO" id="GO:1990904">
    <property type="term" value="C:ribonucleoprotein complex"/>
    <property type="evidence" value="ECO:0007669"/>
    <property type="project" value="UniProtKB-KW"/>
</dbReference>
<dbReference type="GO" id="GO:0005840">
    <property type="term" value="C:ribosome"/>
    <property type="evidence" value="ECO:0007669"/>
    <property type="project" value="UniProtKB-KW"/>
</dbReference>
<dbReference type="GO" id="GO:0003729">
    <property type="term" value="F:mRNA binding"/>
    <property type="evidence" value="ECO:0007669"/>
    <property type="project" value="TreeGrafter"/>
</dbReference>
<dbReference type="GO" id="GO:0003743">
    <property type="term" value="F:translation initiation factor activity"/>
    <property type="evidence" value="ECO:0007669"/>
    <property type="project" value="InterPro"/>
</dbReference>
<dbReference type="GO" id="GO:0001731">
    <property type="term" value="P:formation of translation preinitiation complex"/>
    <property type="evidence" value="ECO:0007669"/>
    <property type="project" value="TreeGrafter"/>
</dbReference>
<dbReference type="GO" id="GO:0002188">
    <property type="term" value="P:translation reinitiation"/>
    <property type="evidence" value="ECO:0007669"/>
    <property type="project" value="TreeGrafter"/>
</dbReference>
<dbReference type="CDD" id="cd11607">
    <property type="entry name" value="DENR_C"/>
    <property type="match status" value="1"/>
</dbReference>
<dbReference type="FunFam" id="3.30.780.10:FF:000013">
    <property type="entry name" value="Translation machinery-associated protein 22"/>
    <property type="match status" value="1"/>
</dbReference>
<dbReference type="Gene3D" id="3.30.780.10">
    <property type="entry name" value="SUI1-like domain"/>
    <property type="match status" value="1"/>
</dbReference>
<dbReference type="InterPro" id="IPR050318">
    <property type="entry name" value="DENR/SUI1_TIF"/>
</dbReference>
<dbReference type="InterPro" id="IPR046447">
    <property type="entry name" value="DENR_C"/>
</dbReference>
<dbReference type="InterPro" id="IPR005873">
    <property type="entry name" value="DENR_eukaryotes"/>
</dbReference>
<dbReference type="InterPro" id="IPR048517">
    <property type="entry name" value="DENR_N"/>
</dbReference>
<dbReference type="InterPro" id="IPR001950">
    <property type="entry name" value="SUI1"/>
</dbReference>
<dbReference type="InterPro" id="IPR036877">
    <property type="entry name" value="SUI1_dom_sf"/>
</dbReference>
<dbReference type="NCBIfam" id="TIGR01159">
    <property type="entry name" value="DRP1"/>
    <property type="match status" value="1"/>
</dbReference>
<dbReference type="PANTHER" id="PTHR12789:SF0">
    <property type="entry name" value="DENSITY-REGULATED PROTEIN"/>
    <property type="match status" value="1"/>
</dbReference>
<dbReference type="PANTHER" id="PTHR12789">
    <property type="entry name" value="DENSITY-REGULATED PROTEIN HOMOLOG"/>
    <property type="match status" value="1"/>
</dbReference>
<dbReference type="Pfam" id="PF21023">
    <property type="entry name" value="DENR_N"/>
    <property type="match status" value="1"/>
</dbReference>
<dbReference type="Pfam" id="PF01253">
    <property type="entry name" value="SUI1"/>
    <property type="match status" value="1"/>
</dbReference>
<dbReference type="SUPFAM" id="SSF55159">
    <property type="entry name" value="eIF1-like"/>
    <property type="match status" value="1"/>
</dbReference>
<dbReference type="PROSITE" id="PS50296">
    <property type="entry name" value="SUI1"/>
    <property type="match status" value="1"/>
</dbReference>
<keyword id="KW-0963">Cytoplasm</keyword>
<keyword id="KW-1185">Reference proteome</keyword>
<keyword id="KW-0687">Ribonucleoprotein</keyword>
<keyword id="KW-0689">Ribosomal protein</keyword>
<proteinExistence type="inferred from homology"/>
<gene>
    <name type="primary">TMA22</name>
    <name type="ordered locus">KLLA0F21934g</name>
</gene>
<feature type="chain" id="PRO_0000320443" description="Translation machinery-associated protein 22">
    <location>
        <begin position="1"/>
        <end position="200"/>
    </location>
</feature>
<feature type="domain" description="SUI1" evidence="2">
    <location>
        <begin position="95"/>
        <end position="166"/>
    </location>
</feature>
<organism>
    <name type="scientific">Kluyveromyces lactis (strain ATCC 8585 / CBS 2359 / DSM 70799 / NBRC 1267 / NRRL Y-1140 / WM37)</name>
    <name type="common">Yeast</name>
    <name type="synonym">Candida sphaerica</name>
    <dbReference type="NCBI Taxonomy" id="284590"/>
    <lineage>
        <taxon>Eukaryota</taxon>
        <taxon>Fungi</taxon>
        <taxon>Dikarya</taxon>
        <taxon>Ascomycota</taxon>
        <taxon>Saccharomycotina</taxon>
        <taxon>Saccharomycetes</taxon>
        <taxon>Saccharomycetales</taxon>
        <taxon>Saccharomycetaceae</taxon>
        <taxon>Kluyveromyces</taxon>
    </lineage>
</organism>
<name>DENR_KLULA</name>
<protein>
    <recommendedName>
        <fullName>Translation machinery-associated protein 22</fullName>
    </recommendedName>
</protein>
<evidence type="ECO:0000250" key="1"/>
<evidence type="ECO:0000255" key="2">
    <source>
        <dbReference type="PROSITE-ProRule" id="PRU00200"/>
    </source>
</evidence>
<evidence type="ECO:0000305" key="3"/>
<sequence>MPLTNVIYCGVCDFPAEYCEFSGKFKRCKAWLQENHPELYTKWYGDVTEDVSKQLAESSIGDEREEKLEKALEKLERKQQAREERELAKKLSSKVVIRREARTKRKCMIAISGLEVFEIDMKKLSKTFASKFATGCSISKNAEKKEEVIVQGDLADEVEAYIHSLLEEKGMKEVKVEVIDAAKKKKKAETTTTPGSENKK</sequence>
<accession>Q6CJ30</accession>
<reference key="1">
    <citation type="journal article" date="2004" name="Nature">
        <title>Genome evolution in yeasts.</title>
        <authorList>
            <person name="Dujon B."/>
            <person name="Sherman D."/>
            <person name="Fischer G."/>
            <person name="Durrens P."/>
            <person name="Casaregola S."/>
            <person name="Lafontaine I."/>
            <person name="de Montigny J."/>
            <person name="Marck C."/>
            <person name="Neuveglise C."/>
            <person name="Talla E."/>
            <person name="Goffard N."/>
            <person name="Frangeul L."/>
            <person name="Aigle M."/>
            <person name="Anthouard V."/>
            <person name="Babour A."/>
            <person name="Barbe V."/>
            <person name="Barnay S."/>
            <person name="Blanchin S."/>
            <person name="Beckerich J.-M."/>
            <person name="Beyne E."/>
            <person name="Bleykasten C."/>
            <person name="Boisrame A."/>
            <person name="Boyer J."/>
            <person name="Cattolico L."/>
            <person name="Confanioleri F."/>
            <person name="de Daruvar A."/>
            <person name="Despons L."/>
            <person name="Fabre E."/>
            <person name="Fairhead C."/>
            <person name="Ferry-Dumazet H."/>
            <person name="Groppi A."/>
            <person name="Hantraye F."/>
            <person name="Hennequin C."/>
            <person name="Jauniaux N."/>
            <person name="Joyet P."/>
            <person name="Kachouri R."/>
            <person name="Kerrest A."/>
            <person name="Koszul R."/>
            <person name="Lemaire M."/>
            <person name="Lesur I."/>
            <person name="Ma L."/>
            <person name="Muller H."/>
            <person name="Nicaud J.-M."/>
            <person name="Nikolski M."/>
            <person name="Oztas S."/>
            <person name="Ozier-Kalogeropoulos O."/>
            <person name="Pellenz S."/>
            <person name="Potier S."/>
            <person name="Richard G.-F."/>
            <person name="Straub M.-L."/>
            <person name="Suleau A."/>
            <person name="Swennen D."/>
            <person name="Tekaia F."/>
            <person name="Wesolowski-Louvel M."/>
            <person name="Westhof E."/>
            <person name="Wirth B."/>
            <person name="Zeniou-Meyer M."/>
            <person name="Zivanovic Y."/>
            <person name="Bolotin-Fukuhara M."/>
            <person name="Thierry A."/>
            <person name="Bouchier C."/>
            <person name="Caudron B."/>
            <person name="Scarpelli C."/>
            <person name="Gaillardin C."/>
            <person name="Weissenbach J."/>
            <person name="Wincker P."/>
            <person name="Souciet J.-L."/>
        </authorList>
    </citation>
    <scope>NUCLEOTIDE SEQUENCE [LARGE SCALE GENOMIC DNA]</scope>
    <source>
        <strain>ATCC 8585 / CBS 2359 / DSM 70799 / NBRC 1267 / NRRL Y-1140 / WM37</strain>
    </source>
</reference>